<sequence>MDKRMVDQEFHNEDTDLELSLRPTQLKQYIGQSSIKSNLEVFIKAAKLRQEPLDHVLLFGPPGLGKTTLSNIIANEMEVNIRTISGPSLERPGDLAAILSGLQPGDVLFIDEIHRLSSVVEEVLYPAMEDFFLDIIIGKGDEARSIRIDLPPFTLVGATTRAGSLTGPLRDRFGVHLRLEYYNENDLKEIITRTAEVLGTDIDKESALELARRSRGTPRIANRLLKRVRDFQQVNEDDQIYIETTKRALQLLQVDQHGLDYIDHKMMNCIINQYNGGPVGLDTIAVSIGEERVTIEDVYEPFLIQRGFLERTPRGRKATALAYEHFNTTNEKRE</sequence>
<name>RUVB_STAES</name>
<organism>
    <name type="scientific">Staphylococcus epidermidis (strain ATCC 12228 / FDA PCI 1200)</name>
    <dbReference type="NCBI Taxonomy" id="176280"/>
    <lineage>
        <taxon>Bacteria</taxon>
        <taxon>Bacillati</taxon>
        <taxon>Bacillota</taxon>
        <taxon>Bacilli</taxon>
        <taxon>Bacillales</taxon>
        <taxon>Staphylococcaceae</taxon>
        <taxon>Staphylococcus</taxon>
    </lineage>
</organism>
<keyword id="KW-0067">ATP-binding</keyword>
<keyword id="KW-0963">Cytoplasm</keyword>
<keyword id="KW-0227">DNA damage</keyword>
<keyword id="KW-0233">DNA recombination</keyword>
<keyword id="KW-0234">DNA repair</keyword>
<keyword id="KW-0238">DNA-binding</keyword>
<keyword id="KW-0378">Hydrolase</keyword>
<keyword id="KW-0547">Nucleotide-binding</keyword>
<proteinExistence type="inferred from homology"/>
<feature type="chain" id="PRO_0000165600" description="Holliday junction branch migration complex subunit RuvB">
    <location>
        <begin position="1"/>
        <end position="334"/>
    </location>
</feature>
<feature type="region of interest" description="Large ATPase domain (RuvB-L)" evidence="1">
    <location>
        <begin position="1"/>
        <end position="182"/>
    </location>
</feature>
<feature type="region of interest" description="Small ATPAse domain (RuvB-S)" evidence="1">
    <location>
        <begin position="183"/>
        <end position="253"/>
    </location>
</feature>
<feature type="region of interest" description="Head domain (RuvB-H)" evidence="1">
    <location>
        <begin position="256"/>
        <end position="334"/>
    </location>
</feature>
<feature type="binding site" evidence="1">
    <location>
        <position position="21"/>
    </location>
    <ligand>
        <name>ATP</name>
        <dbReference type="ChEBI" id="CHEBI:30616"/>
    </ligand>
</feature>
<feature type="binding site" evidence="1">
    <location>
        <position position="22"/>
    </location>
    <ligand>
        <name>ATP</name>
        <dbReference type="ChEBI" id="CHEBI:30616"/>
    </ligand>
</feature>
<feature type="binding site" evidence="1">
    <location>
        <position position="63"/>
    </location>
    <ligand>
        <name>ATP</name>
        <dbReference type="ChEBI" id="CHEBI:30616"/>
    </ligand>
</feature>
<feature type="binding site" evidence="1">
    <location>
        <position position="66"/>
    </location>
    <ligand>
        <name>ATP</name>
        <dbReference type="ChEBI" id="CHEBI:30616"/>
    </ligand>
</feature>
<feature type="binding site" evidence="1">
    <location>
        <position position="67"/>
    </location>
    <ligand>
        <name>ATP</name>
        <dbReference type="ChEBI" id="CHEBI:30616"/>
    </ligand>
</feature>
<feature type="binding site" evidence="1">
    <location>
        <position position="67"/>
    </location>
    <ligand>
        <name>Mg(2+)</name>
        <dbReference type="ChEBI" id="CHEBI:18420"/>
    </ligand>
</feature>
<feature type="binding site" evidence="1">
    <location>
        <position position="68"/>
    </location>
    <ligand>
        <name>ATP</name>
        <dbReference type="ChEBI" id="CHEBI:30616"/>
    </ligand>
</feature>
<feature type="binding site" evidence="1">
    <location>
        <begin position="129"/>
        <end position="131"/>
    </location>
    <ligand>
        <name>ATP</name>
        <dbReference type="ChEBI" id="CHEBI:30616"/>
    </ligand>
</feature>
<feature type="binding site" evidence="1">
    <location>
        <position position="172"/>
    </location>
    <ligand>
        <name>ATP</name>
        <dbReference type="ChEBI" id="CHEBI:30616"/>
    </ligand>
</feature>
<feature type="binding site" evidence="1">
    <location>
        <position position="182"/>
    </location>
    <ligand>
        <name>ATP</name>
        <dbReference type="ChEBI" id="CHEBI:30616"/>
    </ligand>
</feature>
<feature type="binding site" evidence="1">
    <location>
        <position position="219"/>
    </location>
    <ligand>
        <name>ATP</name>
        <dbReference type="ChEBI" id="CHEBI:30616"/>
    </ligand>
</feature>
<feature type="binding site" evidence="1">
    <location>
        <position position="292"/>
    </location>
    <ligand>
        <name>DNA</name>
        <dbReference type="ChEBI" id="CHEBI:16991"/>
    </ligand>
</feature>
<feature type="binding site" evidence="1">
    <location>
        <position position="311"/>
    </location>
    <ligand>
        <name>DNA</name>
        <dbReference type="ChEBI" id="CHEBI:16991"/>
    </ligand>
</feature>
<feature type="binding site" evidence="1">
    <location>
        <position position="316"/>
    </location>
    <ligand>
        <name>DNA</name>
        <dbReference type="ChEBI" id="CHEBI:16991"/>
    </ligand>
</feature>
<accession>Q8CS91</accession>
<gene>
    <name evidence="1" type="primary">ruvB</name>
    <name type="ordered locus">SE_1324</name>
</gene>
<protein>
    <recommendedName>
        <fullName evidence="1">Holliday junction branch migration complex subunit RuvB</fullName>
        <ecNumber evidence="1">3.6.4.-</ecNumber>
    </recommendedName>
</protein>
<reference key="1">
    <citation type="journal article" date="2003" name="Mol. Microbiol.">
        <title>Genome-based analysis of virulence genes in a non-biofilm-forming Staphylococcus epidermidis strain (ATCC 12228).</title>
        <authorList>
            <person name="Zhang Y.-Q."/>
            <person name="Ren S.-X."/>
            <person name="Li H.-L."/>
            <person name="Wang Y.-X."/>
            <person name="Fu G."/>
            <person name="Yang J."/>
            <person name="Qin Z.-Q."/>
            <person name="Miao Y.-G."/>
            <person name="Wang W.-Y."/>
            <person name="Chen R.-S."/>
            <person name="Shen Y."/>
            <person name="Chen Z."/>
            <person name="Yuan Z.-H."/>
            <person name="Zhao G.-P."/>
            <person name="Qu D."/>
            <person name="Danchin A."/>
            <person name="Wen Y.-M."/>
        </authorList>
    </citation>
    <scope>NUCLEOTIDE SEQUENCE [LARGE SCALE GENOMIC DNA]</scope>
    <source>
        <strain>ATCC 12228 / FDA PCI 1200</strain>
    </source>
</reference>
<comment type="function">
    <text evidence="1">The RuvA-RuvB-RuvC complex processes Holliday junction (HJ) DNA during genetic recombination and DNA repair, while the RuvA-RuvB complex plays an important role in the rescue of blocked DNA replication forks via replication fork reversal (RFR). RuvA specifically binds to HJ cruciform DNA, conferring on it an open structure. The RuvB hexamer acts as an ATP-dependent pump, pulling dsDNA into and through the RuvAB complex. RuvB forms 2 homohexamers on either side of HJ DNA bound by 1 or 2 RuvA tetramers; 4 subunits per hexamer contact DNA at a time. Coordinated motions by a converter formed by DNA-disengaged RuvB subunits stimulates ATP hydrolysis and nucleotide exchange. Immobilization of the converter enables RuvB to convert the ATP-contained energy into a lever motion, pulling 2 nucleotides of DNA out of the RuvA tetramer per ATP hydrolyzed, thus driving DNA branch migration. The RuvB motors rotate together with the DNA substrate, which together with the progressing nucleotide cycle form the mechanistic basis for DNA recombination by continuous HJ branch migration. Branch migration allows RuvC to scan DNA until it finds its consensus sequence, where it cleaves and resolves cruciform DNA.</text>
</comment>
<comment type="catalytic activity">
    <reaction evidence="1">
        <text>ATP + H2O = ADP + phosphate + H(+)</text>
        <dbReference type="Rhea" id="RHEA:13065"/>
        <dbReference type="ChEBI" id="CHEBI:15377"/>
        <dbReference type="ChEBI" id="CHEBI:15378"/>
        <dbReference type="ChEBI" id="CHEBI:30616"/>
        <dbReference type="ChEBI" id="CHEBI:43474"/>
        <dbReference type="ChEBI" id="CHEBI:456216"/>
    </reaction>
</comment>
<comment type="subunit">
    <text evidence="1">Homohexamer. Forms an RuvA(8)-RuvB(12)-Holliday junction (HJ) complex. HJ DNA is sandwiched between 2 RuvA tetramers; dsDNA enters through RuvA and exits via RuvB. An RuvB hexamer assembles on each DNA strand where it exits the tetramer. Each RuvB hexamer is contacted by two RuvA subunits (via domain III) on 2 adjacent RuvB subunits; this complex drives branch migration. In the full resolvosome a probable DNA-RuvA(4)-RuvB(12)-RuvC(2) complex forms which resolves the HJ.</text>
</comment>
<comment type="subcellular location">
    <subcellularLocation>
        <location evidence="1">Cytoplasm</location>
    </subcellularLocation>
</comment>
<comment type="domain">
    <text evidence="1">Has 3 domains, the large (RuvB-L) and small ATPase (RuvB-S) domains and the C-terminal head (RuvB-H) domain. The head domain binds DNA, while the ATPase domains jointly bind ATP, ADP or are empty depending on the state of the subunit in the translocation cycle. During a single DNA translocation step the structure of each domain remains the same, but their relative positions change.</text>
</comment>
<comment type="similarity">
    <text evidence="1">Belongs to the RuvB family.</text>
</comment>
<dbReference type="EC" id="3.6.4.-" evidence="1"/>
<dbReference type="EMBL" id="AE015929">
    <property type="protein sequence ID" value="AAO04923.1"/>
    <property type="molecule type" value="Genomic_DNA"/>
</dbReference>
<dbReference type="RefSeq" id="NP_764879.1">
    <property type="nucleotide sequence ID" value="NC_004461.1"/>
</dbReference>
<dbReference type="RefSeq" id="WP_001830787.1">
    <property type="nucleotide sequence ID" value="NZ_WBME01000016.1"/>
</dbReference>
<dbReference type="SMR" id="Q8CS91"/>
<dbReference type="GeneID" id="50018561"/>
<dbReference type="KEGG" id="sep:SE_1324"/>
<dbReference type="PATRIC" id="fig|176280.10.peg.1293"/>
<dbReference type="eggNOG" id="COG2255">
    <property type="taxonomic scope" value="Bacteria"/>
</dbReference>
<dbReference type="HOGENOM" id="CLU_055599_1_0_9"/>
<dbReference type="OrthoDB" id="9804478at2"/>
<dbReference type="Proteomes" id="UP000001411">
    <property type="component" value="Chromosome"/>
</dbReference>
<dbReference type="GO" id="GO:0005737">
    <property type="term" value="C:cytoplasm"/>
    <property type="evidence" value="ECO:0007669"/>
    <property type="project" value="UniProtKB-SubCell"/>
</dbReference>
<dbReference type="GO" id="GO:0048476">
    <property type="term" value="C:Holliday junction resolvase complex"/>
    <property type="evidence" value="ECO:0007669"/>
    <property type="project" value="UniProtKB-UniRule"/>
</dbReference>
<dbReference type="GO" id="GO:0005524">
    <property type="term" value="F:ATP binding"/>
    <property type="evidence" value="ECO:0007669"/>
    <property type="project" value="UniProtKB-UniRule"/>
</dbReference>
<dbReference type="GO" id="GO:0016887">
    <property type="term" value="F:ATP hydrolysis activity"/>
    <property type="evidence" value="ECO:0007669"/>
    <property type="project" value="InterPro"/>
</dbReference>
<dbReference type="GO" id="GO:0000400">
    <property type="term" value="F:four-way junction DNA binding"/>
    <property type="evidence" value="ECO:0007669"/>
    <property type="project" value="UniProtKB-UniRule"/>
</dbReference>
<dbReference type="GO" id="GO:0009378">
    <property type="term" value="F:four-way junction helicase activity"/>
    <property type="evidence" value="ECO:0007669"/>
    <property type="project" value="InterPro"/>
</dbReference>
<dbReference type="GO" id="GO:0006310">
    <property type="term" value="P:DNA recombination"/>
    <property type="evidence" value="ECO:0007669"/>
    <property type="project" value="UniProtKB-UniRule"/>
</dbReference>
<dbReference type="GO" id="GO:0006281">
    <property type="term" value="P:DNA repair"/>
    <property type="evidence" value="ECO:0007669"/>
    <property type="project" value="UniProtKB-UniRule"/>
</dbReference>
<dbReference type="CDD" id="cd00009">
    <property type="entry name" value="AAA"/>
    <property type="match status" value="1"/>
</dbReference>
<dbReference type="Gene3D" id="1.10.8.60">
    <property type="match status" value="1"/>
</dbReference>
<dbReference type="Gene3D" id="3.40.50.300">
    <property type="entry name" value="P-loop containing nucleotide triphosphate hydrolases"/>
    <property type="match status" value="1"/>
</dbReference>
<dbReference type="Gene3D" id="1.10.10.10">
    <property type="entry name" value="Winged helix-like DNA-binding domain superfamily/Winged helix DNA-binding domain"/>
    <property type="match status" value="1"/>
</dbReference>
<dbReference type="HAMAP" id="MF_00016">
    <property type="entry name" value="DNA_HJ_migration_RuvB"/>
    <property type="match status" value="1"/>
</dbReference>
<dbReference type="InterPro" id="IPR003593">
    <property type="entry name" value="AAA+_ATPase"/>
</dbReference>
<dbReference type="InterPro" id="IPR041445">
    <property type="entry name" value="AAA_lid_4"/>
</dbReference>
<dbReference type="InterPro" id="IPR004605">
    <property type="entry name" value="DNA_helicase_Holl-junc_RuvB"/>
</dbReference>
<dbReference type="InterPro" id="IPR027417">
    <property type="entry name" value="P-loop_NTPase"/>
</dbReference>
<dbReference type="InterPro" id="IPR008824">
    <property type="entry name" value="RuvB-like_N"/>
</dbReference>
<dbReference type="InterPro" id="IPR008823">
    <property type="entry name" value="RuvB_C"/>
</dbReference>
<dbReference type="InterPro" id="IPR036388">
    <property type="entry name" value="WH-like_DNA-bd_sf"/>
</dbReference>
<dbReference type="InterPro" id="IPR036390">
    <property type="entry name" value="WH_DNA-bd_sf"/>
</dbReference>
<dbReference type="NCBIfam" id="NF000868">
    <property type="entry name" value="PRK00080.1"/>
    <property type="match status" value="1"/>
</dbReference>
<dbReference type="NCBIfam" id="TIGR00635">
    <property type="entry name" value="ruvB"/>
    <property type="match status" value="1"/>
</dbReference>
<dbReference type="PANTHER" id="PTHR42848">
    <property type="match status" value="1"/>
</dbReference>
<dbReference type="PANTHER" id="PTHR42848:SF1">
    <property type="entry name" value="HOLLIDAY JUNCTION BRANCH MIGRATION COMPLEX SUBUNIT RUVB"/>
    <property type="match status" value="1"/>
</dbReference>
<dbReference type="Pfam" id="PF17864">
    <property type="entry name" value="AAA_lid_4"/>
    <property type="match status" value="1"/>
</dbReference>
<dbReference type="Pfam" id="PF05491">
    <property type="entry name" value="RuvB_C"/>
    <property type="match status" value="1"/>
</dbReference>
<dbReference type="Pfam" id="PF05496">
    <property type="entry name" value="RuvB_N"/>
    <property type="match status" value="1"/>
</dbReference>
<dbReference type="SMART" id="SM00382">
    <property type="entry name" value="AAA"/>
    <property type="match status" value="1"/>
</dbReference>
<dbReference type="SUPFAM" id="SSF52540">
    <property type="entry name" value="P-loop containing nucleoside triphosphate hydrolases"/>
    <property type="match status" value="1"/>
</dbReference>
<dbReference type="SUPFAM" id="SSF46785">
    <property type="entry name" value="Winged helix' DNA-binding domain"/>
    <property type="match status" value="1"/>
</dbReference>
<evidence type="ECO:0000255" key="1">
    <source>
        <dbReference type="HAMAP-Rule" id="MF_00016"/>
    </source>
</evidence>